<organism>
    <name type="scientific">Prochlorococcus marinus (strain AS9601)</name>
    <dbReference type="NCBI Taxonomy" id="146891"/>
    <lineage>
        <taxon>Bacteria</taxon>
        <taxon>Bacillati</taxon>
        <taxon>Cyanobacteriota</taxon>
        <taxon>Cyanophyceae</taxon>
        <taxon>Synechococcales</taxon>
        <taxon>Prochlorococcaceae</taxon>
        <taxon>Prochlorococcus</taxon>
    </lineage>
</organism>
<reference key="1">
    <citation type="journal article" date="2007" name="PLoS Genet.">
        <title>Patterns and implications of gene gain and loss in the evolution of Prochlorococcus.</title>
        <authorList>
            <person name="Kettler G.C."/>
            <person name="Martiny A.C."/>
            <person name="Huang K."/>
            <person name="Zucker J."/>
            <person name="Coleman M.L."/>
            <person name="Rodrigue S."/>
            <person name="Chen F."/>
            <person name="Lapidus A."/>
            <person name="Ferriera S."/>
            <person name="Johnson J."/>
            <person name="Steglich C."/>
            <person name="Church G.M."/>
            <person name="Richardson P."/>
            <person name="Chisholm S.W."/>
        </authorList>
    </citation>
    <scope>NUCLEOTIDE SEQUENCE [LARGE SCALE GENOMIC DNA]</scope>
    <source>
        <strain>AS9601</strain>
    </source>
</reference>
<comment type="function">
    <text evidence="1">Catalyzes the GTP-dependent ribosomal translocation step during translation elongation. During this step, the ribosome changes from the pre-translocational (PRE) to the post-translocational (POST) state as the newly formed A-site-bound peptidyl-tRNA and P-site-bound deacylated tRNA move to the P and E sites, respectively. Catalyzes the coordinated movement of the two tRNA molecules, the mRNA and conformational changes in the ribosome.</text>
</comment>
<comment type="subcellular location">
    <subcellularLocation>
        <location evidence="1">Cytoplasm</location>
    </subcellularLocation>
</comment>
<comment type="similarity">
    <text evidence="1">Belongs to the TRAFAC class translation factor GTPase superfamily. Classic translation factor GTPase family. EF-G/EF-2 subfamily.</text>
</comment>
<proteinExistence type="inferred from homology"/>
<feature type="chain" id="PRO_1000008869" description="Elongation factor G">
    <location>
        <begin position="1"/>
        <end position="691"/>
    </location>
</feature>
<feature type="domain" description="tr-type G">
    <location>
        <begin position="8"/>
        <end position="282"/>
    </location>
</feature>
<feature type="binding site" evidence="1">
    <location>
        <begin position="17"/>
        <end position="24"/>
    </location>
    <ligand>
        <name>GTP</name>
        <dbReference type="ChEBI" id="CHEBI:37565"/>
    </ligand>
</feature>
<feature type="binding site" evidence="1">
    <location>
        <begin position="81"/>
        <end position="85"/>
    </location>
    <ligand>
        <name>GTP</name>
        <dbReference type="ChEBI" id="CHEBI:37565"/>
    </ligand>
</feature>
<feature type="binding site" evidence="1">
    <location>
        <begin position="135"/>
        <end position="138"/>
    </location>
    <ligand>
        <name>GTP</name>
        <dbReference type="ChEBI" id="CHEBI:37565"/>
    </ligand>
</feature>
<sequence>MARDFPLERVRNIGIAAHIDAGKTTTTERILFYSGVVHKIGEVHDGAAVTDWMAQERERGITITAAAISTSWQDHRINIIDTPGHVDFTIEVERSMRVLDGVIAVFCAVGGVQPQSETVWRQADRYSVPRMVFVNKMDRTGADFLKVNKQIKDRLKANALPIQLPIGAEGDLTGIIDLVANKAYLYKNDLGTDIEEAPIPSEMEEEAAEWRFKLMESVAENDEELIEIFLETGELSEEQLKKGIREGVLKHGLVPVLCGSAFKNKGVQLVLDAVVDYLPAPVDVKPIQGVLPSGKEDIRPSDDNAPFSALAFKVMSDPYGKLTFVRMYSGVLSKGSYVMNSTKDAKERISRLVILKADEREEVDELRAGDLGAVLGLKNTTTGDTLCNTEDPIVLETLFIPEPVISVAVEPKTKGDMEKLSKALTALSEEDPTFRVSTDPETNQTVIAGMGELHLEILVDRMLREFKVEANIGAPQVSYRETIRSSSKGEGKYARQTGGKGQYGHVIIEMEPAEVGKGFEFVNKIVGGAVPKEYIGPASNGMKETCESGVLAGYPLIDVKVTLVDGSFHDVDSSEMAFKIAGSMAFKDGVKKCNPVLLEPMMKVEVESPDDFLGSVIGDLSSRRGQVEGQSVDDGLSKVQAKVPLAEMFGYATQLRSMTQGRGIFSMEFANYEEVPRNVAEAIISKNQGNS</sequence>
<protein>
    <recommendedName>
        <fullName evidence="1">Elongation factor G</fullName>
        <shortName evidence="1">EF-G</shortName>
    </recommendedName>
</protein>
<name>EFG_PROMS</name>
<accession>A2BT84</accession>
<gene>
    <name evidence="1" type="primary">fusA</name>
    <name type="ordered locus">A9601_17121</name>
</gene>
<evidence type="ECO:0000255" key="1">
    <source>
        <dbReference type="HAMAP-Rule" id="MF_00054"/>
    </source>
</evidence>
<keyword id="KW-0963">Cytoplasm</keyword>
<keyword id="KW-0251">Elongation factor</keyword>
<keyword id="KW-0342">GTP-binding</keyword>
<keyword id="KW-0547">Nucleotide-binding</keyword>
<keyword id="KW-0648">Protein biosynthesis</keyword>
<dbReference type="EMBL" id="CP000551">
    <property type="protein sequence ID" value="ABM70995.1"/>
    <property type="molecule type" value="Genomic_DNA"/>
</dbReference>
<dbReference type="RefSeq" id="WP_011819122.1">
    <property type="nucleotide sequence ID" value="NC_008816.1"/>
</dbReference>
<dbReference type="SMR" id="A2BT84"/>
<dbReference type="STRING" id="146891.A9601_17121"/>
<dbReference type="KEGG" id="pmb:A9601_17121"/>
<dbReference type="eggNOG" id="COG0480">
    <property type="taxonomic scope" value="Bacteria"/>
</dbReference>
<dbReference type="HOGENOM" id="CLU_002794_4_1_3"/>
<dbReference type="OrthoDB" id="580826at2"/>
<dbReference type="Proteomes" id="UP000002590">
    <property type="component" value="Chromosome"/>
</dbReference>
<dbReference type="GO" id="GO:0005737">
    <property type="term" value="C:cytoplasm"/>
    <property type="evidence" value="ECO:0007669"/>
    <property type="project" value="UniProtKB-SubCell"/>
</dbReference>
<dbReference type="GO" id="GO:0005525">
    <property type="term" value="F:GTP binding"/>
    <property type="evidence" value="ECO:0007669"/>
    <property type="project" value="UniProtKB-UniRule"/>
</dbReference>
<dbReference type="GO" id="GO:0003924">
    <property type="term" value="F:GTPase activity"/>
    <property type="evidence" value="ECO:0007669"/>
    <property type="project" value="InterPro"/>
</dbReference>
<dbReference type="GO" id="GO:0003746">
    <property type="term" value="F:translation elongation factor activity"/>
    <property type="evidence" value="ECO:0007669"/>
    <property type="project" value="UniProtKB-UniRule"/>
</dbReference>
<dbReference type="GO" id="GO:0032790">
    <property type="term" value="P:ribosome disassembly"/>
    <property type="evidence" value="ECO:0007669"/>
    <property type="project" value="TreeGrafter"/>
</dbReference>
<dbReference type="CDD" id="cd01886">
    <property type="entry name" value="EF-G"/>
    <property type="match status" value="1"/>
</dbReference>
<dbReference type="CDD" id="cd16262">
    <property type="entry name" value="EFG_III"/>
    <property type="match status" value="1"/>
</dbReference>
<dbReference type="CDD" id="cd01434">
    <property type="entry name" value="EFG_mtEFG1_IV"/>
    <property type="match status" value="1"/>
</dbReference>
<dbReference type="CDD" id="cd03713">
    <property type="entry name" value="EFG_mtEFG_C"/>
    <property type="match status" value="1"/>
</dbReference>
<dbReference type="CDD" id="cd04088">
    <property type="entry name" value="EFG_mtEFG_II"/>
    <property type="match status" value="1"/>
</dbReference>
<dbReference type="FunFam" id="2.40.30.10:FF:000006">
    <property type="entry name" value="Elongation factor G"/>
    <property type="match status" value="1"/>
</dbReference>
<dbReference type="FunFam" id="3.30.230.10:FF:000003">
    <property type="entry name" value="Elongation factor G"/>
    <property type="match status" value="1"/>
</dbReference>
<dbReference type="FunFam" id="3.30.70.240:FF:000001">
    <property type="entry name" value="Elongation factor G"/>
    <property type="match status" value="1"/>
</dbReference>
<dbReference type="FunFam" id="3.30.70.870:FF:000001">
    <property type="entry name" value="Elongation factor G"/>
    <property type="match status" value="1"/>
</dbReference>
<dbReference type="FunFam" id="3.40.50.300:FF:000029">
    <property type="entry name" value="Elongation factor G"/>
    <property type="match status" value="1"/>
</dbReference>
<dbReference type="Gene3D" id="3.30.230.10">
    <property type="match status" value="1"/>
</dbReference>
<dbReference type="Gene3D" id="3.30.70.240">
    <property type="match status" value="1"/>
</dbReference>
<dbReference type="Gene3D" id="3.30.70.870">
    <property type="entry name" value="Elongation Factor G (Translational Gtpase), domain 3"/>
    <property type="match status" value="1"/>
</dbReference>
<dbReference type="Gene3D" id="3.40.50.300">
    <property type="entry name" value="P-loop containing nucleotide triphosphate hydrolases"/>
    <property type="match status" value="1"/>
</dbReference>
<dbReference type="Gene3D" id="2.40.30.10">
    <property type="entry name" value="Translation factors"/>
    <property type="match status" value="1"/>
</dbReference>
<dbReference type="HAMAP" id="MF_00054_B">
    <property type="entry name" value="EF_G_EF_2_B"/>
    <property type="match status" value="1"/>
</dbReference>
<dbReference type="InterPro" id="IPR041095">
    <property type="entry name" value="EFG_II"/>
</dbReference>
<dbReference type="InterPro" id="IPR009022">
    <property type="entry name" value="EFG_III"/>
</dbReference>
<dbReference type="InterPro" id="IPR035647">
    <property type="entry name" value="EFG_III/V"/>
</dbReference>
<dbReference type="InterPro" id="IPR047872">
    <property type="entry name" value="EFG_IV"/>
</dbReference>
<dbReference type="InterPro" id="IPR035649">
    <property type="entry name" value="EFG_V"/>
</dbReference>
<dbReference type="InterPro" id="IPR000640">
    <property type="entry name" value="EFG_V-like"/>
</dbReference>
<dbReference type="InterPro" id="IPR004161">
    <property type="entry name" value="EFTu-like_2"/>
</dbReference>
<dbReference type="InterPro" id="IPR031157">
    <property type="entry name" value="G_TR_CS"/>
</dbReference>
<dbReference type="InterPro" id="IPR027417">
    <property type="entry name" value="P-loop_NTPase"/>
</dbReference>
<dbReference type="InterPro" id="IPR020568">
    <property type="entry name" value="Ribosomal_Su5_D2-typ_SF"/>
</dbReference>
<dbReference type="InterPro" id="IPR014721">
    <property type="entry name" value="Ribsml_uS5_D2-typ_fold_subgr"/>
</dbReference>
<dbReference type="InterPro" id="IPR005225">
    <property type="entry name" value="Small_GTP-bd"/>
</dbReference>
<dbReference type="InterPro" id="IPR000795">
    <property type="entry name" value="T_Tr_GTP-bd_dom"/>
</dbReference>
<dbReference type="InterPro" id="IPR009000">
    <property type="entry name" value="Transl_B-barrel_sf"/>
</dbReference>
<dbReference type="InterPro" id="IPR004540">
    <property type="entry name" value="Transl_elong_EFG/EF2"/>
</dbReference>
<dbReference type="InterPro" id="IPR005517">
    <property type="entry name" value="Transl_elong_EFG/EF2_IV"/>
</dbReference>
<dbReference type="NCBIfam" id="TIGR00484">
    <property type="entry name" value="EF-G"/>
    <property type="match status" value="1"/>
</dbReference>
<dbReference type="NCBIfam" id="NF009379">
    <property type="entry name" value="PRK12740.1-3"/>
    <property type="match status" value="1"/>
</dbReference>
<dbReference type="NCBIfam" id="NF009381">
    <property type="entry name" value="PRK12740.1-5"/>
    <property type="match status" value="1"/>
</dbReference>
<dbReference type="NCBIfam" id="TIGR00231">
    <property type="entry name" value="small_GTP"/>
    <property type="match status" value="1"/>
</dbReference>
<dbReference type="PANTHER" id="PTHR43261:SF1">
    <property type="entry name" value="RIBOSOME-RELEASING FACTOR 2, MITOCHONDRIAL"/>
    <property type="match status" value="1"/>
</dbReference>
<dbReference type="PANTHER" id="PTHR43261">
    <property type="entry name" value="TRANSLATION ELONGATION FACTOR G-RELATED"/>
    <property type="match status" value="1"/>
</dbReference>
<dbReference type="Pfam" id="PF00679">
    <property type="entry name" value="EFG_C"/>
    <property type="match status" value="1"/>
</dbReference>
<dbReference type="Pfam" id="PF14492">
    <property type="entry name" value="EFG_III"/>
    <property type="match status" value="1"/>
</dbReference>
<dbReference type="Pfam" id="PF03764">
    <property type="entry name" value="EFG_IV"/>
    <property type="match status" value="1"/>
</dbReference>
<dbReference type="Pfam" id="PF00009">
    <property type="entry name" value="GTP_EFTU"/>
    <property type="match status" value="1"/>
</dbReference>
<dbReference type="Pfam" id="PF03144">
    <property type="entry name" value="GTP_EFTU_D2"/>
    <property type="match status" value="1"/>
</dbReference>
<dbReference type="PRINTS" id="PR00315">
    <property type="entry name" value="ELONGATNFCT"/>
</dbReference>
<dbReference type="SMART" id="SM00838">
    <property type="entry name" value="EFG_C"/>
    <property type="match status" value="1"/>
</dbReference>
<dbReference type="SMART" id="SM00889">
    <property type="entry name" value="EFG_IV"/>
    <property type="match status" value="1"/>
</dbReference>
<dbReference type="SUPFAM" id="SSF54980">
    <property type="entry name" value="EF-G C-terminal domain-like"/>
    <property type="match status" value="2"/>
</dbReference>
<dbReference type="SUPFAM" id="SSF52540">
    <property type="entry name" value="P-loop containing nucleoside triphosphate hydrolases"/>
    <property type="match status" value="1"/>
</dbReference>
<dbReference type="SUPFAM" id="SSF54211">
    <property type="entry name" value="Ribosomal protein S5 domain 2-like"/>
    <property type="match status" value="1"/>
</dbReference>
<dbReference type="SUPFAM" id="SSF50447">
    <property type="entry name" value="Translation proteins"/>
    <property type="match status" value="1"/>
</dbReference>
<dbReference type="PROSITE" id="PS00301">
    <property type="entry name" value="G_TR_1"/>
    <property type="match status" value="1"/>
</dbReference>
<dbReference type="PROSITE" id="PS51722">
    <property type="entry name" value="G_TR_2"/>
    <property type="match status" value="1"/>
</dbReference>